<protein>
    <recommendedName>
        <fullName evidence="18">Carboxysome assembly protein CcmM</fullName>
        <shortName evidence="15">CcmM58</shortName>
        <shortName evidence="15">M58</shortName>
    </recommendedName>
    <alternativeName>
        <fullName>Carbon dioxide concentrating mechanism protein CcmM</fullName>
    </alternativeName>
    <alternativeName>
        <fullName evidence="16">Carboxysome shell associated protein CcmM</fullName>
    </alternativeName>
</protein>
<gene>
    <name evidence="17" type="primary">ccmM</name>
    <name type="ordered locus">Synpcc7942_1423</name>
</gene>
<reference key="1">
    <citation type="journal article" date="1993" name="J. Bacteriol.">
        <title>Analysis of a genomic DNA region from the cyanobacterium Synechococcus sp. strain PCC7942 involved in carboxysome assembly and function.</title>
        <authorList>
            <person name="Price G.D."/>
            <person name="Howitt S.M."/>
            <person name="Harrison K."/>
            <person name="Badger M.R."/>
        </authorList>
    </citation>
    <scope>NUCLEOTIDE SEQUENCE [GENOMIC DNA]</scope>
    <scope>DOMAIN</scope>
    <scope>REPEATS</scope>
    <scope>DISRUPTION PHENOTYPE</scope>
    <source>
        <strain>ATCC 33912 / PCC 7942 / FACHB-805</strain>
    </source>
</reference>
<reference key="2">
    <citation type="submission" date="2005-08" db="EMBL/GenBank/DDBJ databases">
        <title>Complete sequence of chromosome 1 of Synechococcus elongatus PCC 7942.</title>
        <authorList>
            <consortium name="US DOE Joint Genome Institute"/>
            <person name="Copeland A."/>
            <person name="Lucas S."/>
            <person name="Lapidus A."/>
            <person name="Barry K."/>
            <person name="Detter J.C."/>
            <person name="Glavina T."/>
            <person name="Hammon N."/>
            <person name="Israni S."/>
            <person name="Pitluck S."/>
            <person name="Schmutz J."/>
            <person name="Larimer F."/>
            <person name="Land M."/>
            <person name="Kyrpides N."/>
            <person name="Lykidis A."/>
            <person name="Golden S."/>
            <person name="Richardson P."/>
        </authorList>
    </citation>
    <scope>NUCLEOTIDE SEQUENCE [LARGE SCALE GENOMIC DNA]</scope>
    <source>
        <strain>ATCC 33912 / PCC 7942 / FACHB-805</strain>
    </source>
</reference>
<reference key="3">
    <citation type="journal article" date="2005" name="Can. J. Bot.">
        <title>Cyanobacterial carbonic anhydrases.</title>
        <authorList>
            <person name="So A.K."/>
            <person name="Espie G.S."/>
        </authorList>
    </citation>
    <scope>LACK OF CARBONIC ANHYDRASE ACTIVITY</scope>
    <source>
        <strain>ATCC 33912 / PCC 7942 / FACHB-805</strain>
    </source>
</reference>
<reference key="4">
    <citation type="journal article" date="2005" name="Can. J. Bot.">
        <title>Proteomic assessment of an established technique for carboxysome enrichment from Synechococcus PCC7942.</title>
        <authorList>
            <person name="Long B.M."/>
            <person name="Price G.D."/>
            <person name="Badger M.R."/>
        </authorList>
    </citation>
    <scope>IDENTIFICATION BY MASS SPECTROMETRY</scope>
    <scope>SUBCELLULAR LOCATION</scope>
    <scope>2 FORMS OF THE PROTEIN</scope>
    <source>
        <strain>ATCC 33912 / PCC 7942 / FACHB-805</strain>
    </source>
</reference>
<reference key="5">
    <citation type="journal article" date="2007" name="J. Biol. Chem.">
        <title>Analysis of carboxysomes from Synechococcus PCC7942 reveals multiple Rubisco complexes with carboxysomal proteins CcmM and CcaA.</title>
        <authorList>
            <person name="Long B.M."/>
            <person name="Badger M.R."/>
            <person name="Whitney S.M."/>
            <person name="Price G.D."/>
        </authorList>
    </citation>
    <scope>PROTEIN SEQUENCE OF 217-221</scope>
    <scope>ISOFORMS CCMM58 AND CCMM35</scope>
    <scope>FUNCTION</scope>
    <scope>INTERACTION WITH CARBONIC ANHYDRASE AND RUBISCO</scope>
    <scope>SUBUNIT</scope>
    <scope>SUBCELLULAR LOCATION</scope>
    <scope>DOMAIN</scope>
    <scope>DISRUPTION PHENOTYPE</scope>
    <source>
        <strain>ATCC 33912 / PCC 7942 / FACHB-805</strain>
    </source>
</reference>
<reference key="6">
    <citation type="journal article" date="2010" name="Plant Physiol.">
        <title>Functional cyanobacterial beta-carboxysomes have an absolute requirement for both long and short forms of the CcmM protein.</title>
        <authorList>
            <person name="Long B.M."/>
            <person name="Tucker L."/>
            <person name="Badger M.R."/>
            <person name="Price G.D."/>
        </authorList>
    </citation>
    <scope>FUNCTION</scope>
    <scope>ISOFORM CCMM35</scope>
    <scope>SUBCELLULAR LOCATION</scope>
    <scope>DISRUPTION PHENOTYPE</scope>
    <scope>MUTAGENESIS OF GLU-212 AND 215-THR-VAL-216</scope>
    <source>
        <strain>ATCC 33912 / PCC 7942 / FACHB-805</strain>
    </source>
</reference>
<reference key="7">
    <citation type="journal article" date="2012" name="PLoS ONE">
        <title>Structural determinants of the outer shell of beta-carboxysomes in Synechococcus elongatus PCC 7942: roles for CcmK2, K3-K4, CcmO, and CcmL.</title>
        <authorList>
            <person name="Rae B.D."/>
            <person name="Long B.M."/>
            <person name="Badger M.R."/>
            <person name="Price G.D."/>
        </authorList>
    </citation>
    <scope>FUNCTION</scope>
    <scope>DISRUPTION PHENOTYPE</scope>
    <source>
        <strain>ATCC 33912 / PCC 7942 / FACHB-805</strain>
    </source>
</reference>
<reference key="8">
    <citation type="journal article" date="2012" name="J. Biol. Chem.">
        <title>Elucidating essential role of conserved carboxysomal protein CcmN reveals common feature of bacterial microcompartment assembly.</title>
        <authorList>
            <person name="Kinney J.N."/>
            <person name="Salmeen A."/>
            <person name="Cai F."/>
            <person name="Kerfeld C.A."/>
        </authorList>
    </citation>
    <scope>INTERACTION WITH CCMN</scope>
    <source>
        <strain>ATCC 33912 / PCC 7942 / FACHB-805</strain>
    </source>
</reference>
<reference key="9">
    <citation type="journal article" date="2013" name="Cell">
        <title>Biogenesis of a bacterial organelle: the carboxysome assembly pathway.</title>
        <authorList>
            <person name="Cameron J.C."/>
            <person name="Wilson S.C."/>
            <person name="Bernstein S.L."/>
            <person name="Kerfeld C.A."/>
        </authorList>
    </citation>
    <scope>CARBOXYSOME ASSEMBLY PROCESS</scope>
    <scope>FUNCTION</scope>
    <scope>DOMAIN</scope>
    <scope>DISRUPTION PHENOTYPE</scope>
    <source>
        <strain>ATCC 33912 / PCC 7942 / FACHB-805</strain>
    </source>
</reference>
<reference key="10">
    <citation type="journal article" date="2017" name="Mol. Biol. Cell">
        <title>Superresolution microscopy of the beta-carboxysome reveals a homogeneous matrix.</title>
        <authorList>
            <person name="Niederhuber M.J."/>
            <person name="Lambert T.J."/>
            <person name="Yapp C."/>
            <person name="Silver P.A."/>
            <person name="Polka J.K."/>
        </authorList>
    </citation>
    <scope>FUNCTION</scope>
    <scope>ISOFORM CCMM35</scope>
    <scope>ISOFORM CCMM58</scope>
    <scope>SUBCELLULAR LOCATION</scope>
    <scope>DISRUPTION PHENOTYPE</scope>
    <scope>BIOTECHNOLOGY</scope>
    <source>
        <strain>ATCC 33912 / PCC 7942 / FACHB-805</strain>
    </source>
</reference>
<reference key="11">
    <citation type="journal article" date="2017" name="Nanoscale">
        <title>Direct characterization of the native structure and mechanics of cyanobacterial carboxysomes.</title>
        <authorList>
            <person name="Faulkner M."/>
            <person name="Rodriguez-Ramos J."/>
            <person name="Dykes G.F."/>
            <person name="Owen S.V."/>
            <person name="Casella S."/>
            <person name="Simpson D.M."/>
            <person name="Beynon R.J."/>
            <person name="Liu L.N."/>
        </authorList>
    </citation>
    <scope>SUBCELLULAR LOCATION</scope>
    <source>
        <strain>ATCC 33912 / PCC 7942 / FACHB-805</strain>
    </source>
</reference>
<reference key="12">
    <citation type="journal article" date="2018" name="Front. Plant Sci.">
        <title>Engineering and Modulating Functional Cyanobacterial CO2-Fixing Organelles.</title>
        <authorList>
            <person name="Fang Y."/>
            <person name="Huang F."/>
            <person name="Faulkner M."/>
            <person name="Jiang Q."/>
            <person name="Dykes G.F."/>
            <person name="Yang M."/>
            <person name="Liu L.N."/>
        </authorList>
    </citation>
    <scope>BIOTECHNOLOGY</scope>
    <source>
        <strain>ATCC 33912 / PCC 7942 / FACHB-805</strain>
    </source>
</reference>
<reference key="13">
    <citation type="journal article" date="2019" name="Plant Cell">
        <title>Single-Organelle Quantification Reveals Stoichiometric and Structural Variability of Carboxysomes Dependent on the Environment.</title>
        <authorList>
            <person name="Sun Y."/>
            <person name="Wollman A.J.M."/>
            <person name="Huang F."/>
            <person name="Leake M.C."/>
            <person name="Liu L.N."/>
        </authorList>
    </citation>
    <scope>SUBCELLULAR LOCATION</scope>
    <scope>INDUCTION</scope>
    <source>
        <strain>ATCC 33912 / PCC 7942 / FACHB-805</strain>
    </source>
</reference>
<reference evidence="22 23 24" key="14">
    <citation type="journal article" date="2019" name="Nature">
        <title>Rubisco condensate formation by CcmM in beta-carboxysome biogenesis.</title>
        <authorList>
            <person name="Wang H."/>
            <person name="Yan X."/>
            <person name="Aigner H."/>
            <person name="Bracher A."/>
            <person name="Nguyen N.D."/>
            <person name="Hee W.Y."/>
            <person name="Long B.M."/>
            <person name="Price G.D."/>
            <person name="Hartl F.U."/>
            <person name="Hayer-Hartl M."/>
        </authorList>
    </citation>
    <scope>X-RAY CRYSTALLOGRAPHY (1.20 ANGSTROMS) OF 225-313 REDUCED AND OXIDIZED</scope>
    <scope>STRUCTURE BY ELECTRON MICROSCOPY (2.78 ANGSTROMS) OF 225-313 REDUCED IN COMPLEX WITH RUBISCO</scope>
    <scope>FUNCTION</scope>
    <scope>INTERACTION OF CCMM35 WITH RUBISCO</scope>
    <scope>DISULFIDE BOND</scope>
    <scope>MUTAGENESIS OF 251-ARG-ARG-252; CYS-279 AND CYS-395</scope>
    <source>
        <strain>ATCC 33912 / PCC 7942 / FACHB-805</strain>
    </source>
</reference>
<sequence length="539" mass="57833">MPSPTTVPVATAGRLAEPYIDPAAQVHAIASIIGDVRIAAGVRVAAGVSIRADEGAPFQVGKESILQEGAVIHGLEYGRVLGDDQADYSVWIGQRVAITHKALIHGPAYLGDDCFVGFRSTVFNARVGAGSVIMMHALVQDVEIPPGRYVPSGAIITTQQQADRLPEVRPEDREFARHIIGSPPVIVRSTPAATADFHSTPTPSPLRPSSSEATTVSAYNGQGRLSSEVITQVRSLLNQGYRIGTEHADKRRFRTSSWQPCAPIQSTNERQVLSELENCLSEHEGEYVRLLGIDTNTRSRVFEALIQRPDGSVPESLGSQPVAVASGGGRQSSYASVSGNLSAEVVNKVRNLLAQGYRIGTEHADKRRFRTSSWQSCAPIQSSNERQVLAELENCLSEHEGEYVRLLGIDTASRSRVFEALIQDPQGPVGSAKAAAAPVSSATPSSHSYTSNGSSSSDVAGQVRGLLAQGYRISAEVADKRRFQTSSWQSLPALSGQSEATVLPALESILQEHKGKYVRLIGIDPAARRRVAELLIQKP</sequence>
<evidence type="ECO:0000256" key="1">
    <source>
        <dbReference type="SAM" id="MobiDB-lite"/>
    </source>
</evidence>
<evidence type="ECO:0000269" key="2">
    <source>
    </source>
</evidence>
<evidence type="ECO:0000269" key="3">
    <source>
    </source>
</evidence>
<evidence type="ECO:0000269" key="4">
    <source>
    </source>
</evidence>
<evidence type="ECO:0000269" key="5">
    <source>
    </source>
</evidence>
<evidence type="ECO:0000269" key="6">
    <source>
    </source>
</evidence>
<evidence type="ECO:0000269" key="7">
    <source>
    </source>
</evidence>
<evidence type="ECO:0000269" key="8">
    <source>
    </source>
</evidence>
<evidence type="ECO:0000269" key="9">
    <source>
    </source>
</evidence>
<evidence type="ECO:0000269" key="10">
    <source>
    </source>
</evidence>
<evidence type="ECO:0000269" key="11">
    <source>
    </source>
</evidence>
<evidence type="ECO:0000269" key="12">
    <source>
    </source>
</evidence>
<evidence type="ECO:0000269" key="13">
    <source ref="3"/>
</evidence>
<evidence type="ECO:0000269" key="14">
    <source ref="4"/>
</evidence>
<evidence type="ECO:0000303" key="15">
    <source>
    </source>
</evidence>
<evidence type="ECO:0000303" key="16">
    <source>
    </source>
</evidence>
<evidence type="ECO:0000303" key="17">
    <source>
    </source>
</evidence>
<evidence type="ECO:0000305" key="18"/>
<evidence type="ECO:0000305" key="19">
    <source>
    </source>
</evidence>
<evidence type="ECO:0000305" key="20">
    <source>
    </source>
</evidence>
<evidence type="ECO:0000305" key="21">
    <source>
    </source>
</evidence>
<evidence type="ECO:0007744" key="22">
    <source>
        <dbReference type="PDB" id="6HBA"/>
    </source>
</evidence>
<evidence type="ECO:0007744" key="23">
    <source>
        <dbReference type="PDB" id="6HBB"/>
    </source>
</evidence>
<evidence type="ECO:0007744" key="24">
    <source>
        <dbReference type="PDB" id="6HBC"/>
    </source>
</evidence>
<evidence type="ECO:0007829" key="25">
    <source>
        <dbReference type="PDB" id="6HBB"/>
    </source>
</evidence>
<evidence type="ECO:0007829" key="26">
    <source>
        <dbReference type="PDB" id="7O54"/>
    </source>
</evidence>
<name>CCMM_SYNE7</name>
<accession>Q03513</accession>
<accession>Q31NB6</accession>
<comment type="function">
    <text evidence="2 3 6 8 11 13 19 20">Functions as a scaffold protein for the assembly of beta-carboxysomes, initiates carboxysome assembly by coalescing RuBisCO (ribulose bisphosphate carboxylase, rbcL-rbcS) (Probable) (PubMed:24267892). Produced as a full-length (M58) and a shorter form (M35); both forms are required for correct carboxysome assembly and growth (PubMed:20304968). The short form is more abundant (PubMed:17675289, PubMed:20304968, PubMed:28963440, PubMed:31048338). Despite its strong similarity to gamma-class carbonic anhydrase (CA) it does not have detectable CA activity (Ref.3).</text>
</comment>
<comment type="function">
    <molecule>Isoform CcmM35</molecule>
    <text evidence="10">The M35 isoform is able to condense RuBisCO into a liquid matrix; the presence of disulfide bonds in M35 reduces affinity for RuBisCO, while mutating all 4 Cys to Ser causes a 4-fold increase in doubling time, more than 15% increase in CO(2) requirement, and abnormal carboxysomes.</text>
</comment>
<comment type="function">
    <text evidence="6 8 10">Beta-carboxysome assembly initiates when soluble RuBisCO is condensed into a liquid matrix in a pre-carboxysome by the RbcS-like domains of probably both CcmM58 and CcmM35. CcmN interacts with the N-terminus of CcmM58, and then recruits the CcmK2 major shell protein plus other less abundant CcmK proteins via CcmN's encapsulation peptide. Shell formation requires CcmK proteins and CcmO. CcmL caps the otherwise elongated carboxysome. Once fully encapsulated carboxysomes are formed, they migrate within the cell probably via interactions with the cytoskeleton.</text>
</comment>
<comment type="subunit">
    <molecule>Isoform CcmM58</molecule>
    <text evidence="2 4 10 19">Probably a homotrimer (Probable). Purifies from carboxysomes in complex with both RuBisCO subunits and carbonic anhydrase (ccaA); the complex is probably associated with the carboxysome shell (PubMed:17675289). Interacts with CcmN (PubMed:22461622). Binds holo-RuBisCO (RbcL(8)-RbcS(8)) via its SSUL domains; the SSUL domain binds close to the equitorial domain of RuBisCO between RbcL dimers, with 1 M35 protein per dimer (PubMed:30675061).</text>
</comment>
<comment type="subunit">
    <molecule>Isoform CcmM35</molecule>
    <text evidence="2">The short form purifies from carboxysomes in complex with both RuBisCO subunits; the complex is probably associated with the carboxysome shell.</text>
</comment>
<comment type="subcellular location">
    <subcellularLocation>
        <location evidence="2 3 7 11 14">Carboxysome</location>
    </subcellularLocation>
    <text evidence="8 14">This cyanobacterium makes beta-type carboxysomes (Ref.4). Both isoforms are found equally distributed in the interior of the carboxysome (PubMed:28963440).</text>
</comment>
<comment type="alternative products">
    <event type="alternative initiation"/>
    <isoform>
        <id>Q03513-1</id>
        <name evidence="3 19">CcmM58</name>
        <sequence type="displayed"/>
    </isoform>
    <isoform>
        <id>Q03513-2</id>
        <name evidence="3 19">CcmM35</name>
        <sequence type="described" ref="VSP_060771 VSP_060772"/>
    </isoform>
</comment>
<comment type="induction">
    <text evidence="11">Carboxysome size and components vary with growth conditions. When grown in ambient air at medium light (50 uE meter(-2) second(-1)) there are 719 units (both forms are included in this measure) of this protein per carboxysome, the numbers decrease under low light and high CO(2), and increase under high light (at protein level).</text>
</comment>
<comment type="domain">
    <text evidence="6 10 12 19">In the N-terminus has a gamma-class carbonic anhydrase-like domain (CA), while the C-terminus has 3 repeats that are similar to the small subunit of RuBisCO (rbcS), called SSUL. The SSUL are connected by flexible linkers. The N-terminal domain forms a scaffold on which CA and maybe other carboxysomal proteins assemble, while the C-terminus binds RuBisCO (Probable) (PubMed:8491708). At least 2 SSUL domains are required for initiation of carboxysome assembly (PubMed:24267892). Isolated reduced and oxidized CcmM35 binds holo-RuBisCO (RbcL(8)-RbcS(8)) but neither subunit octamer alone; RuBisCO has a higher affinity for reduced M35 (PubMed:30675061).</text>
</comment>
<comment type="PTM">
    <text evidence="2 3 14">Identified as 2 proteins of 58 and 38 kDa by mass spectrometry, called M58 and M35, the shorter protein is translated starting at Val-216. Protease inhibitors do not alter the appearance of M35 (PubMed:20304968, Ref.4). In isolated carboxysomes M35 is 4-5 fold more abundant. The first amino acid (equivalent to Val-216) is not seen in Edman degradation, while Tyr-219 and Gln-222 may be post-translationally modified (PubMed:17675289).</text>
</comment>
<comment type="disruption phenotype">
    <text evidence="2 3 5 8 12">Single gene deletion does not form normal carboxysomes, and does not grow in normal air but in 2% CO(2), called a high-CO(2) requiring phenotype, HCR. CcmK2 and RuBisCO are targeted to an abnormal large polar body in some studies, RuBisCO is soluble in others (PubMed:17675289, PubMed:20304968, PubMed:22928045, PubMed:28963440, PubMed:8491708). When ccmL-ccmM-ccmN-ccmO are deleted no carboxysomes form, cells are HCR and RuBisCO is soluble (PubMed:8491708).</text>
</comment>
<comment type="biotechnology">
    <text evidence="8 9">Heterologous expression of 12 carboxysomal genes in E.coli (ccaA, ccmK2, ccmK3, ccmK4, ccmL, ccmM, ccmN, ccmO, ccmP, rbcL, rbcS, rbcX) leads to the formation of bodies that resemble carboxysomes, have densely packed paracrystalline arrays and RuBisCO activity. These structures open the door to generating carboxysomes in plant cells to increase their photosynthesis and productivity, as well as tailoring bacterial microcompartments to specific metabolic needs and molecule delivery (PubMed:29922315). Large fluorescent tags can be attached simultaneously to both termini of this protein (adding about 60 kDa) and do not prevent carboxysome formation, showing proteins can be targeted to carboxysomes by fusion to endogenous proteins (PubMed:28963440).</text>
</comment>
<comment type="miscellaneous">
    <text evidence="3">The M35 form (short form) is translated from the internal start codon Val-216 (gtg), under control of an internal Shine-Dalgarno sequence. Silent mutation of the codon for Val-216 to a non-start codon (i.e. gtg to gtc) leads to low level expression of the M35 form, and abnormal carboxysomes which contain the expected proteins, but does not grow in normal air. A strain that has a stop codon at residue 215 makes abnormal carboxysomes which contain the expected proteins, trace amounts of the N-terminus and is HCR, while a strain that expresses only M35 has only RuBisCO in the abnormal carboxysomes and is HCR.</text>
</comment>
<comment type="similarity">
    <text evidence="18">Belongs to the gamma-class carbonic anhydrase family.</text>
</comment>
<organism>
    <name type="scientific">Synechococcus elongatus (strain ATCC 33912 / PCC 7942 / FACHB-805)</name>
    <name type="common">Anacystis nidulans R2</name>
    <dbReference type="NCBI Taxonomy" id="1140"/>
    <lineage>
        <taxon>Bacteria</taxon>
        <taxon>Bacillati</taxon>
        <taxon>Cyanobacteriota</taxon>
        <taxon>Cyanophyceae</taxon>
        <taxon>Synechococcales</taxon>
        <taxon>Synechococcaceae</taxon>
        <taxon>Synechococcus</taxon>
    </lineage>
</organism>
<proteinExistence type="evidence at protein level"/>
<dbReference type="EMBL" id="M96929">
    <property type="protein sequence ID" value="AAA27306.1"/>
    <property type="molecule type" value="Genomic_DNA"/>
</dbReference>
<dbReference type="EMBL" id="CP000100">
    <property type="protein sequence ID" value="ABB57453.1"/>
    <property type="molecule type" value="Genomic_DNA"/>
</dbReference>
<dbReference type="PIR" id="D36904">
    <property type="entry name" value="D36904"/>
</dbReference>
<dbReference type="RefSeq" id="WP_011378029.1">
    <property type="nucleotide sequence ID" value="NZ_JACJTX010000004.1"/>
</dbReference>
<dbReference type="PDB" id="6HBA">
    <property type="method" value="X-ray"/>
    <property type="resolution" value="1.65 A"/>
    <property type="chains" value="A/B=225-313"/>
</dbReference>
<dbReference type="PDB" id="6HBB">
    <property type="method" value="X-ray"/>
    <property type="resolution" value="1.20 A"/>
    <property type="chains" value="A/B=225-313"/>
</dbReference>
<dbReference type="PDB" id="6HBC">
    <property type="method" value="EM"/>
    <property type="resolution" value="2.78 A"/>
    <property type="chains" value="A=225-313"/>
</dbReference>
<dbReference type="PDB" id="7D6C">
    <property type="method" value="X-ray"/>
    <property type="resolution" value="2.89 A"/>
    <property type="chains" value="1/2=1-209"/>
</dbReference>
<dbReference type="PDB" id="7O4Z">
    <property type="method" value="X-ray"/>
    <property type="resolution" value="1.67 A"/>
    <property type="chains" value="A=1-181"/>
</dbReference>
<dbReference type="PDB" id="7O54">
    <property type="method" value="X-ray"/>
    <property type="resolution" value="1.63 A"/>
    <property type="chains" value="A=1-181"/>
</dbReference>
<dbReference type="PDBsum" id="6HBA"/>
<dbReference type="PDBsum" id="6HBB"/>
<dbReference type="PDBsum" id="6HBC"/>
<dbReference type="PDBsum" id="7D6C"/>
<dbReference type="PDBsum" id="7O4Z"/>
<dbReference type="PDBsum" id="7O54"/>
<dbReference type="EMDB" id="EMD-0180"/>
<dbReference type="SMR" id="Q03513"/>
<dbReference type="STRING" id="1140.Synpcc7942_1423"/>
<dbReference type="PaxDb" id="1140-Synpcc7942_1423"/>
<dbReference type="KEGG" id="syf:Synpcc7942_1423"/>
<dbReference type="eggNOG" id="COG0663">
    <property type="taxonomic scope" value="Bacteria"/>
</dbReference>
<dbReference type="eggNOG" id="COG4451">
    <property type="taxonomic scope" value="Bacteria"/>
</dbReference>
<dbReference type="HOGENOM" id="CLU_019008_0_0_3"/>
<dbReference type="OrthoDB" id="9803036at2"/>
<dbReference type="BioCyc" id="SYNEL:SYNPCC7942_1423-MONOMER"/>
<dbReference type="CD-CODE" id="04340D3C">
    <property type="entry name" value="Synthetic Condensate 000348"/>
</dbReference>
<dbReference type="CD-CODE" id="42323686">
    <property type="entry name" value="Synthetic Condensate 000212"/>
</dbReference>
<dbReference type="CD-CODE" id="6EF1C41E">
    <property type="entry name" value="Synthetic Condensate 000225"/>
</dbReference>
<dbReference type="Proteomes" id="UP000889800">
    <property type="component" value="Chromosome"/>
</dbReference>
<dbReference type="GO" id="GO:0031470">
    <property type="term" value="C:carboxysome"/>
    <property type="evidence" value="ECO:0000314"/>
    <property type="project" value="UniProtKB"/>
</dbReference>
<dbReference type="GO" id="GO:0043886">
    <property type="term" value="F:structural constituent of carboxysome shell"/>
    <property type="evidence" value="ECO:0000314"/>
    <property type="project" value="UniProtKB"/>
</dbReference>
<dbReference type="GO" id="GO:0015977">
    <property type="term" value="P:carbon fixation"/>
    <property type="evidence" value="ECO:0007669"/>
    <property type="project" value="UniProtKB-KW"/>
</dbReference>
<dbReference type="GO" id="GO:0015979">
    <property type="term" value="P:photosynthesis"/>
    <property type="evidence" value="ECO:0007669"/>
    <property type="project" value="UniProtKB-KW"/>
</dbReference>
<dbReference type="CDD" id="cd00710">
    <property type="entry name" value="LbH_gamma_CA"/>
    <property type="match status" value="1"/>
</dbReference>
<dbReference type="CDD" id="cd00307">
    <property type="entry name" value="RuBisCO_small_like"/>
    <property type="match status" value="3"/>
</dbReference>
<dbReference type="Gene3D" id="2.160.10.10">
    <property type="entry name" value="Hexapeptide repeat proteins"/>
    <property type="match status" value="1"/>
</dbReference>
<dbReference type="Gene3D" id="3.30.190.10">
    <property type="entry name" value="Ribulose bisphosphate carboxylase, small subunit"/>
    <property type="match status" value="3"/>
</dbReference>
<dbReference type="InterPro" id="IPR047223">
    <property type="entry name" value="CA_gamma_LbH"/>
</dbReference>
<dbReference type="InterPro" id="IPR017156">
    <property type="entry name" value="CcmM"/>
</dbReference>
<dbReference type="InterPro" id="IPR052265">
    <property type="entry name" value="Gamma-CA"/>
</dbReference>
<dbReference type="InterPro" id="IPR000894">
    <property type="entry name" value="RuBisCO_ssu_dom"/>
</dbReference>
<dbReference type="InterPro" id="IPR036385">
    <property type="entry name" value="RuBisCO_ssu_sf"/>
</dbReference>
<dbReference type="InterPro" id="IPR011004">
    <property type="entry name" value="Trimer_LpxA-like_sf"/>
</dbReference>
<dbReference type="PANTHER" id="PTHR43360">
    <property type="entry name" value="CARBON DIOXIDE CONCENTRATING MECHANISM PROTEIN CCMM"/>
    <property type="match status" value="1"/>
</dbReference>
<dbReference type="PANTHER" id="PTHR43360:SF1">
    <property type="entry name" value="CARBOXYSOME ASSEMBLY PROTEIN CCMM"/>
    <property type="match status" value="1"/>
</dbReference>
<dbReference type="Pfam" id="PF00101">
    <property type="entry name" value="RuBisCO_small"/>
    <property type="match status" value="3"/>
</dbReference>
<dbReference type="PIRSF" id="PIRSF037250">
    <property type="entry name" value="CcmM"/>
    <property type="match status" value="1"/>
</dbReference>
<dbReference type="SMART" id="SM00961">
    <property type="entry name" value="RuBisCO_small"/>
    <property type="match status" value="3"/>
</dbReference>
<dbReference type="SUPFAM" id="SSF55239">
    <property type="entry name" value="RuBisCO, small subunit"/>
    <property type="match status" value="3"/>
</dbReference>
<dbReference type="SUPFAM" id="SSF51161">
    <property type="entry name" value="Trimeric LpxA-like enzymes"/>
    <property type="match status" value="1"/>
</dbReference>
<keyword id="KW-0002">3D-structure</keyword>
<keyword id="KW-0024">Alternative initiation</keyword>
<keyword id="KW-1283">Bacterial microcompartment</keyword>
<keyword id="KW-0120">Carbon dioxide fixation</keyword>
<keyword id="KW-1282">Carboxysome</keyword>
<keyword id="KW-0903">Direct protein sequencing</keyword>
<keyword id="KW-1015">Disulfide bond</keyword>
<keyword id="KW-0602">Photosynthesis</keyword>
<keyword id="KW-1185">Reference proteome</keyword>
<keyword id="KW-0677">Repeat</keyword>
<feature type="chain" id="PRO_0000077473" description="Carboxysome assembly protein CcmM">
    <location>
        <begin position="1"/>
        <end position="539"/>
    </location>
</feature>
<feature type="repeat" description="RbcS-like repeat 1, SSUL1" evidence="10 12">
    <location>
        <begin position="226"/>
        <end position="397"/>
    </location>
</feature>
<feature type="repeat" description="RbcS-like repeat 2, SSUL2" evidence="12 21">
    <location>
        <begin position="341"/>
        <end position="425"/>
    </location>
</feature>
<feature type="repeat" description="RbcS-like repeat 3, SSUL3" evidence="12 21">
    <location>
        <begin position="453"/>
        <end position="539"/>
    </location>
</feature>
<feature type="region of interest" description="Carbonic anhydrase-like domain" evidence="19">
    <location>
        <begin position="1"/>
        <end position="214"/>
    </location>
</feature>
<feature type="region of interest" description="Disordered" evidence="1">
    <location>
        <begin position="194"/>
        <end position="213"/>
    </location>
</feature>
<feature type="region of interest" description="Disordered" evidence="1">
    <location>
        <begin position="427"/>
        <end position="459"/>
    </location>
</feature>
<feature type="compositionally biased region" description="Low complexity" evidence="1">
    <location>
        <begin position="431"/>
        <end position="457"/>
    </location>
</feature>
<feature type="disulfide bond" evidence="10 22">
    <location>
        <begin position="261"/>
        <end position="279"/>
    </location>
</feature>
<feature type="disulfide bond" evidence="21">
    <location>
        <begin position="377"/>
        <end position="395"/>
    </location>
</feature>
<feature type="splice variant" id="VSP_060771" description="In isoform CcmM35." evidence="2 3">
    <location>
        <begin position="1"/>
        <end position="215"/>
    </location>
</feature>
<feature type="splice variant" id="VSP_060772" description="In isoform CcmM35." evidence="19">
    <original>V</original>
    <variation>M</variation>
    <location>
        <position position="216"/>
    </location>
</feature>
<feature type="mutagenesis site" description="Low level expression of the M35 form, abnormal carboxysomes which contain the expected proteins, cells are HCR, alters the Shine-Dalgarno sequence of M35." evidence="3">
    <original>E</original>
    <variation>S</variation>
    <location>
        <position position="212"/>
    </location>
</feature>
<feature type="mutagenesis site" description="Low level expression of the M35 form, abnormal carboxysomes which contain the expected proteins, cells are HCR, removes the start codon of M35." evidence="3">
    <original>TV</original>
    <variation>NL</variation>
    <location>
        <begin position="215"/>
        <end position="216"/>
    </location>
</feature>
<feature type="mutagenesis site" description="Prevents RuBisCO condensation." evidence="10">
    <original>RR</original>
    <variation>DD</variation>
    <location>
        <begin position="251"/>
        <end position="252"/>
    </location>
</feature>
<feature type="mutagenesis site" description="About 2-fold increased doubling time, about 15% increase in CO(2) requirement." evidence="10">
    <original>C</original>
    <variation>S</variation>
    <location>
        <position position="279"/>
    </location>
</feature>
<feature type="mutagenesis site" description="About 2-fold increased doubling time, about 15% increase in CO(2) requirement." evidence="10">
    <original>C</original>
    <variation>S</variation>
    <location>
        <position position="395"/>
    </location>
</feature>
<feature type="strand" evidence="26">
    <location>
        <begin position="31"/>
        <end position="38"/>
    </location>
</feature>
<feature type="strand" evidence="26">
    <location>
        <begin position="49"/>
        <end position="55"/>
    </location>
</feature>
<feature type="strand" evidence="26">
    <location>
        <begin position="58"/>
        <end position="60"/>
    </location>
</feature>
<feature type="strand" evidence="26">
    <location>
        <begin position="71"/>
        <end position="74"/>
    </location>
</feature>
<feature type="strand" evidence="26">
    <location>
        <begin position="87"/>
        <end position="92"/>
    </location>
</feature>
<feature type="strand" evidence="26">
    <location>
        <begin position="103"/>
        <end position="110"/>
    </location>
</feature>
<feature type="strand" evidence="26">
    <location>
        <begin position="121"/>
        <end position="127"/>
    </location>
</feature>
<feature type="strand" evidence="26">
    <location>
        <begin position="138"/>
        <end position="141"/>
    </location>
</feature>
<feature type="strand" evidence="26">
    <location>
        <begin position="148"/>
        <end position="150"/>
    </location>
</feature>
<feature type="helix" evidence="26">
    <location>
        <begin position="159"/>
        <end position="163"/>
    </location>
</feature>
<feature type="helix" evidence="26">
    <location>
        <begin position="170"/>
        <end position="179"/>
    </location>
</feature>
<feature type="helix" evidence="25">
    <location>
        <begin position="227"/>
        <end position="238"/>
    </location>
</feature>
<feature type="strand" evidence="25">
    <location>
        <begin position="242"/>
        <end position="248"/>
    </location>
</feature>
<feature type="helix" evidence="25">
    <location>
        <begin position="250"/>
        <end position="254"/>
    </location>
</feature>
<feature type="helix" evidence="25">
    <location>
        <begin position="269"/>
        <end position="282"/>
    </location>
</feature>
<feature type="turn" evidence="25">
    <location>
        <begin position="283"/>
        <end position="285"/>
    </location>
</feature>
<feature type="strand" evidence="25">
    <location>
        <begin position="286"/>
        <end position="293"/>
    </location>
</feature>
<feature type="turn" evidence="25">
    <location>
        <begin position="295"/>
        <end position="297"/>
    </location>
</feature>
<feature type="strand" evidence="25">
    <location>
        <begin position="300"/>
        <end position="307"/>
    </location>
</feature>